<proteinExistence type="inferred from homology"/>
<sequence length="155" mass="17730">MAKGEGHILAQNKKARHDYHIVETVEAGIVLTGTEIKSVRAARIQLKDGFAQIKNGEAWLVNVHIAPFEQGNIWNADPERTRKLLLKKREITHLANELKGSGMTLVPLKVYLKDGFAKVLIGLAKGKHEYDKRETIKRRDQERDIKKQMKHYNAR</sequence>
<keyword id="KW-0963">Cytoplasm</keyword>
<keyword id="KW-0694">RNA-binding</keyword>
<feature type="chain" id="PRO_1000002168" description="SsrA-binding protein">
    <location>
        <begin position="1"/>
        <end position="155"/>
    </location>
</feature>
<feature type="region of interest" description="Disordered" evidence="2">
    <location>
        <begin position="135"/>
        <end position="155"/>
    </location>
</feature>
<feature type="compositionally biased region" description="Basic and acidic residues" evidence="2">
    <location>
        <begin position="135"/>
        <end position="147"/>
    </location>
</feature>
<protein>
    <recommendedName>
        <fullName evidence="1">SsrA-binding protein</fullName>
    </recommendedName>
    <alternativeName>
        <fullName evidence="1">Small protein B</fullName>
    </alternativeName>
</protein>
<evidence type="ECO:0000255" key="1">
    <source>
        <dbReference type="HAMAP-Rule" id="MF_00023"/>
    </source>
</evidence>
<evidence type="ECO:0000256" key="2">
    <source>
        <dbReference type="SAM" id="MobiDB-lite"/>
    </source>
</evidence>
<organism>
    <name type="scientific">Streptococcus pyogenes serotype M28 (strain MGAS6180)</name>
    <dbReference type="NCBI Taxonomy" id="319701"/>
    <lineage>
        <taxon>Bacteria</taxon>
        <taxon>Bacillati</taxon>
        <taxon>Bacillota</taxon>
        <taxon>Bacilli</taxon>
        <taxon>Lactobacillales</taxon>
        <taxon>Streptococcaceae</taxon>
        <taxon>Streptococcus</taxon>
    </lineage>
</organism>
<accession>Q48UT9</accession>
<name>SSRP_STRPM</name>
<reference key="1">
    <citation type="journal article" date="2005" name="J. Infect. Dis.">
        <title>Genome sequence of a serotype M28 strain of group A Streptococcus: potential new insights into puerperal sepsis and bacterial disease specificity.</title>
        <authorList>
            <person name="Green N.M."/>
            <person name="Zhang S."/>
            <person name="Porcella S.F."/>
            <person name="Nagiec M.J."/>
            <person name="Barbian K.D."/>
            <person name="Beres S.B."/>
            <person name="Lefebvre R.B."/>
            <person name="Musser J.M."/>
        </authorList>
    </citation>
    <scope>NUCLEOTIDE SEQUENCE [LARGE SCALE GENOMIC DNA]</scope>
    <source>
        <strain>MGAS6180</strain>
    </source>
</reference>
<gene>
    <name evidence="1" type="primary">smpB</name>
    <name type="ordered locus">M28_Spy0403</name>
</gene>
<dbReference type="EMBL" id="CP000056">
    <property type="protein sequence ID" value="AAX71517.1"/>
    <property type="molecule type" value="Genomic_DNA"/>
</dbReference>
<dbReference type="RefSeq" id="WP_002994152.1">
    <property type="nucleotide sequence ID" value="NC_007296.2"/>
</dbReference>
<dbReference type="SMR" id="Q48UT9"/>
<dbReference type="GeneID" id="69901269"/>
<dbReference type="KEGG" id="spb:M28_Spy0403"/>
<dbReference type="HOGENOM" id="CLU_108953_0_0_9"/>
<dbReference type="GO" id="GO:0005829">
    <property type="term" value="C:cytosol"/>
    <property type="evidence" value="ECO:0007669"/>
    <property type="project" value="TreeGrafter"/>
</dbReference>
<dbReference type="GO" id="GO:0003723">
    <property type="term" value="F:RNA binding"/>
    <property type="evidence" value="ECO:0007669"/>
    <property type="project" value="UniProtKB-UniRule"/>
</dbReference>
<dbReference type="GO" id="GO:0070929">
    <property type="term" value="P:trans-translation"/>
    <property type="evidence" value="ECO:0007669"/>
    <property type="project" value="UniProtKB-UniRule"/>
</dbReference>
<dbReference type="CDD" id="cd09294">
    <property type="entry name" value="SmpB"/>
    <property type="match status" value="1"/>
</dbReference>
<dbReference type="Gene3D" id="2.40.280.10">
    <property type="match status" value="1"/>
</dbReference>
<dbReference type="HAMAP" id="MF_00023">
    <property type="entry name" value="SmpB"/>
    <property type="match status" value="1"/>
</dbReference>
<dbReference type="InterPro" id="IPR023620">
    <property type="entry name" value="SmpB"/>
</dbReference>
<dbReference type="InterPro" id="IPR000037">
    <property type="entry name" value="SsrA-bd_prot"/>
</dbReference>
<dbReference type="InterPro" id="IPR020081">
    <property type="entry name" value="SsrA-bd_prot_CS"/>
</dbReference>
<dbReference type="NCBIfam" id="NF003843">
    <property type="entry name" value="PRK05422.1"/>
    <property type="match status" value="1"/>
</dbReference>
<dbReference type="NCBIfam" id="TIGR00086">
    <property type="entry name" value="smpB"/>
    <property type="match status" value="1"/>
</dbReference>
<dbReference type="PANTHER" id="PTHR30308:SF2">
    <property type="entry name" value="SSRA-BINDING PROTEIN"/>
    <property type="match status" value="1"/>
</dbReference>
<dbReference type="PANTHER" id="PTHR30308">
    <property type="entry name" value="TMRNA-BINDING COMPONENT OF TRANS-TRANSLATION TAGGING COMPLEX"/>
    <property type="match status" value="1"/>
</dbReference>
<dbReference type="Pfam" id="PF01668">
    <property type="entry name" value="SmpB"/>
    <property type="match status" value="1"/>
</dbReference>
<dbReference type="SUPFAM" id="SSF74982">
    <property type="entry name" value="Small protein B (SmpB)"/>
    <property type="match status" value="1"/>
</dbReference>
<dbReference type="PROSITE" id="PS01317">
    <property type="entry name" value="SSRP"/>
    <property type="match status" value="1"/>
</dbReference>
<comment type="function">
    <text evidence="1">Required for rescue of stalled ribosomes mediated by trans-translation. Binds to transfer-messenger RNA (tmRNA), required for stable association of tmRNA with ribosomes. tmRNA and SmpB together mimic tRNA shape, replacing the anticodon stem-loop with SmpB. tmRNA is encoded by the ssrA gene; the 2 termini fold to resemble tRNA(Ala) and it encodes a 'tag peptide', a short internal open reading frame. During trans-translation Ala-aminoacylated tmRNA acts like a tRNA, entering the A-site of stalled ribosomes, displacing the stalled mRNA. The ribosome then switches to translate the ORF on the tmRNA; the nascent peptide is terminated with the 'tag peptide' encoded by the tmRNA and targeted for degradation. The ribosome is freed to recommence translation, which seems to be the essential function of trans-translation.</text>
</comment>
<comment type="subcellular location">
    <subcellularLocation>
        <location evidence="1">Cytoplasm</location>
    </subcellularLocation>
    <text evidence="1">The tmRNA-SmpB complex associates with stalled 70S ribosomes.</text>
</comment>
<comment type="similarity">
    <text evidence="1">Belongs to the SmpB family.</text>
</comment>